<proteinExistence type="evidence at transcript level"/>
<reference key="1">
    <citation type="journal article" date="2005" name="Nature">
        <title>The map-based sequence of the rice genome.</title>
        <authorList>
            <consortium name="International rice genome sequencing project (IRGSP)"/>
        </authorList>
    </citation>
    <scope>NUCLEOTIDE SEQUENCE [LARGE SCALE GENOMIC DNA]</scope>
    <source>
        <strain>cv. Nipponbare</strain>
    </source>
</reference>
<reference key="2">
    <citation type="journal article" date="2008" name="Nucleic Acids Res.">
        <title>The rice annotation project database (RAP-DB): 2008 update.</title>
        <authorList>
            <consortium name="The rice annotation project (RAP)"/>
        </authorList>
    </citation>
    <scope>GENOME REANNOTATION</scope>
    <source>
        <strain>cv. Nipponbare</strain>
    </source>
</reference>
<reference key="3">
    <citation type="journal article" date="2013" name="Rice">
        <title>Improvement of the Oryza sativa Nipponbare reference genome using next generation sequence and optical map data.</title>
        <authorList>
            <person name="Kawahara Y."/>
            <person name="de la Bastide M."/>
            <person name="Hamilton J.P."/>
            <person name="Kanamori H."/>
            <person name="McCombie W.R."/>
            <person name="Ouyang S."/>
            <person name="Schwartz D.C."/>
            <person name="Tanaka T."/>
            <person name="Wu J."/>
            <person name="Zhou S."/>
            <person name="Childs K.L."/>
            <person name="Davidson R.M."/>
            <person name="Lin H."/>
            <person name="Quesada-Ocampo L."/>
            <person name="Vaillancourt B."/>
            <person name="Sakai H."/>
            <person name="Lee S.S."/>
            <person name="Kim J."/>
            <person name="Numa H."/>
            <person name="Itoh T."/>
            <person name="Buell C.R."/>
            <person name="Matsumoto T."/>
        </authorList>
    </citation>
    <scope>GENOME REANNOTATION</scope>
    <source>
        <strain>cv. Nipponbare</strain>
    </source>
</reference>
<reference key="4">
    <citation type="journal article" date="2005" name="PLoS Biol.">
        <title>The genomes of Oryza sativa: a history of duplications.</title>
        <authorList>
            <person name="Yu J."/>
            <person name="Wang J."/>
            <person name="Lin W."/>
            <person name="Li S."/>
            <person name="Li H."/>
            <person name="Zhou J."/>
            <person name="Ni P."/>
            <person name="Dong W."/>
            <person name="Hu S."/>
            <person name="Zeng C."/>
            <person name="Zhang J."/>
            <person name="Zhang Y."/>
            <person name="Li R."/>
            <person name="Xu Z."/>
            <person name="Li S."/>
            <person name="Li X."/>
            <person name="Zheng H."/>
            <person name="Cong L."/>
            <person name="Lin L."/>
            <person name="Yin J."/>
            <person name="Geng J."/>
            <person name="Li G."/>
            <person name="Shi J."/>
            <person name="Liu J."/>
            <person name="Lv H."/>
            <person name="Li J."/>
            <person name="Wang J."/>
            <person name="Deng Y."/>
            <person name="Ran L."/>
            <person name="Shi X."/>
            <person name="Wang X."/>
            <person name="Wu Q."/>
            <person name="Li C."/>
            <person name="Ren X."/>
            <person name="Wang J."/>
            <person name="Wang X."/>
            <person name="Li D."/>
            <person name="Liu D."/>
            <person name="Zhang X."/>
            <person name="Ji Z."/>
            <person name="Zhao W."/>
            <person name="Sun Y."/>
            <person name="Zhang Z."/>
            <person name="Bao J."/>
            <person name="Han Y."/>
            <person name="Dong L."/>
            <person name="Ji J."/>
            <person name="Chen P."/>
            <person name="Wu S."/>
            <person name="Liu J."/>
            <person name="Xiao Y."/>
            <person name="Bu D."/>
            <person name="Tan J."/>
            <person name="Yang L."/>
            <person name="Ye C."/>
            <person name="Zhang J."/>
            <person name="Xu J."/>
            <person name="Zhou Y."/>
            <person name="Yu Y."/>
            <person name="Zhang B."/>
            <person name="Zhuang S."/>
            <person name="Wei H."/>
            <person name="Liu B."/>
            <person name="Lei M."/>
            <person name="Yu H."/>
            <person name="Li Y."/>
            <person name="Xu H."/>
            <person name="Wei S."/>
            <person name="He X."/>
            <person name="Fang L."/>
            <person name="Zhang Z."/>
            <person name="Zhang Y."/>
            <person name="Huang X."/>
            <person name="Su Z."/>
            <person name="Tong W."/>
            <person name="Li J."/>
            <person name="Tong Z."/>
            <person name="Li S."/>
            <person name="Ye J."/>
            <person name="Wang L."/>
            <person name="Fang L."/>
            <person name="Lei T."/>
            <person name="Chen C.-S."/>
            <person name="Chen H.-C."/>
            <person name="Xu Z."/>
            <person name="Li H."/>
            <person name="Huang H."/>
            <person name="Zhang F."/>
            <person name="Xu H."/>
            <person name="Li N."/>
            <person name="Zhao C."/>
            <person name="Li S."/>
            <person name="Dong L."/>
            <person name="Huang Y."/>
            <person name="Li L."/>
            <person name="Xi Y."/>
            <person name="Qi Q."/>
            <person name="Li W."/>
            <person name="Zhang B."/>
            <person name="Hu W."/>
            <person name="Zhang Y."/>
            <person name="Tian X."/>
            <person name="Jiao Y."/>
            <person name="Liang X."/>
            <person name="Jin J."/>
            <person name="Gao L."/>
            <person name="Zheng W."/>
            <person name="Hao B."/>
            <person name="Liu S.-M."/>
            <person name="Wang W."/>
            <person name="Yuan L."/>
            <person name="Cao M."/>
            <person name="McDermott J."/>
            <person name="Samudrala R."/>
            <person name="Wang J."/>
            <person name="Wong G.K.-S."/>
            <person name="Yang H."/>
        </authorList>
    </citation>
    <scope>NUCLEOTIDE SEQUENCE [LARGE SCALE GENOMIC DNA]</scope>
    <source>
        <strain>cv. Nipponbare</strain>
    </source>
</reference>
<reference key="5">
    <citation type="journal article" date="2003" name="Science">
        <title>Collection, mapping, and annotation of over 28,000 cDNA clones from japonica rice.</title>
        <authorList>
            <consortium name="The rice full-length cDNA consortium"/>
        </authorList>
    </citation>
    <scope>NUCLEOTIDE SEQUENCE [LARGE SCALE MRNA]</scope>
    <source>
        <strain>cv. Nipponbare</strain>
    </source>
</reference>
<reference key="6">
    <citation type="journal article" date="2006" name="Mol. Genet. Genomics">
        <title>Genome-wide analysis of cyclin family in rice (Oryza sativa L.).</title>
        <authorList>
            <person name="La H."/>
            <person name="Li J."/>
            <person name="Ji Z."/>
            <person name="Cheng Y."/>
            <person name="Li X."/>
            <person name="Jiang S."/>
            <person name="Venkatesh P.N."/>
            <person name="Ramachandran S."/>
        </authorList>
    </citation>
    <scope>GENE FAMILY</scope>
    <scope>NOMENCLATURE</scope>
</reference>
<dbReference type="EMBL" id="AP004380">
    <property type="protein sequence ID" value="BAC10182.1"/>
    <property type="molecule type" value="Genomic_DNA"/>
</dbReference>
<dbReference type="EMBL" id="AP008213">
    <property type="protein sequence ID" value="BAF22218.1"/>
    <property type="molecule type" value="Genomic_DNA"/>
</dbReference>
<dbReference type="EMBL" id="AP014963">
    <property type="protein sequence ID" value="BAT02694.1"/>
    <property type="molecule type" value="Genomic_DNA"/>
</dbReference>
<dbReference type="EMBL" id="CM000144">
    <property type="protein sequence ID" value="EAZ40692.1"/>
    <property type="molecule type" value="Genomic_DNA"/>
</dbReference>
<dbReference type="EMBL" id="AK063671">
    <property type="protein sequence ID" value="BAG88814.1"/>
    <property type="molecule type" value="mRNA"/>
</dbReference>
<dbReference type="RefSeq" id="XP_015645531.1">
    <property type="nucleotide sequence ID" value="XM_015790045.1"/>
</dbReference>
<dbReference type="SMR" id="Q8LHA8"/>
<dbReference type="FunCoup" id="Q8LHA8">
    <property type="interactions" value="198"/>
</dbReference>
<dbReference type="STRING" id="39947.Q8LHA8"/>
<dbReference type="PaxDb" id="39947-Q8LHA8"/>
<dbReference type="EnsemblPlants" id="Os07t0620800-01">
    <property type="protein sequence ID" value="Os07t0620800-01"/>
    <property type="gene ID" value="Os07g0620800"/>
</dbReference>
<dbReference type="Gramene" id="Os07t0620800-01">
    <property type="protein sequence ID" value="Os07t0620800-01"/>
    <property type="gene ID" value="Os07g0620800"/>
</dbReference>
<dbReference type="KEGG" id="dosa:Os07g0620800"/>
<dbReference type="eggNOG" id="KOG0656">
    <property type="taxonomic scope" value="Eukaryota"/>
</dbReference>
<dbReference type="HOGENOM" id="CLU_048040_1_1_1"/>
<dbReference type="InParanoid" id="Q8LHA8"/>
<dbReference type="OMA" id="PHDKPWM"/>
<dbReference type="OrthoDB" id="5590282at2759"/>
<dbReference type="Proteomes" id="UP000000763">
    <property type="component" value="Chromosome 7"/>
</dbReference>
<dbReference type="Proteomes" id="UP000007752">
    <property type="component" value="Chromosome 7"/>
</dbReference>
<dbReference type="Proteomes" id="UP000059680">
    <property type="component" value="Chromosome 7"/>
</dbReference>
<dbReference type="GO" id="GO:0000307">
    <property type="term" value="C:cyclin-dependent protein kinase holoenzyme complex"/>
    <property type="evidence" value="ECO:0000318"/>
    <property type="project" value="GO_Central"/>
</dbReference>
<dbReference type="GO" id="GO:0005737">
    <property type="term" value="C:cytoplasm"/>
    <property type="evidence" value="ECO:0000318"/>
    <property type="project" value="GO_Central"/>
</dbReference>
<dbReference type="GO" id="GO:0005634">
    <property type="term" value="C:nucleus"/>
    <property type="evidence" value="ECO:0000318"/>
    <property type="project" value="GO_Central"/>
</dbReference>
<dbReference type="GO" id="GO:0016538">
    <property type="term" value="F:cyclin-dependent protein serine/threonine kinase regulator activity"/>
    <property type="evidence" value="ECO:0000318"/>
    <property type="project" value="GO_Central"/>
</dbReference>
<dbReference type="GO" id="GO:0051301">
    <property type="term" value="P:cell division"/>
    <property type="evidence" value="ECO:0007669"/>
    <property type="project" value="UniProtKB-KW"/>
</dbReference>
<dbReference type="GO" id="GO:0000082">
    <property type="term" value="P:G1/S transition of mitotic cell cycle"/>
    <property type="evidence" value="ECO:0000318"/>
    <property type="project" value="GO_Central"/>
</dbReference>
<dbReference type="CDD" id="cd20543">
    <property type="entry name" value="CYCLIN_AtCycD-like_rpt1"/>
    <property type="match status" value="1"/>
</dbReference>
<dbReference type="CDD" id="cd20544">
    <property type="entry name" value="CYCLIN_AtCycD-like_rpt2"/>
    <property type="match status" value="1"/>
</dbReference>
<dbReference type="FunFam" id="1.10.472.10:FF:000034">
    <property type="entry name" value="D2/4-type cyclin"/>
    <property type="match status" value="1"/>
</dbReference>
<dbReference type="FunFam" id="1.10.472.10:FF:000040">
    <property type="entry name" value="D6-type cyclin"/>
    <property type="match status" value="1"/>
</dbReference>
<dbReference type="Gene3D" id="1.10.472.10">
    <property type="entry name" value="Cyclin-like"/>
    <property type="match status" value="2"/>
</dbReference>
<dbReference type="InterPro" id="IPR039361">
    <property type="entry name" value="Cyclin"/>
</dbReference>
<dbReference type="InterPro" id="IPR013763">
    <property type="entry name" value="Cyclin-like_dom"/>
</dbReference>
<dbReference type="InterPro" id="IPR036915">
    <property type="entry name" value="Cyclin-like_sf"/>
</dbReference>
<dbReference type="InterPro" id="IPR004367">
    <property type="entry name" value="Cyclin_C-dom"/>
</dbReference>
<dbReference type="InterPro" id="IPR006671">
    <property type="entry name" value="Cyclin_N"/>
</dbReference>
<dbReference type="InterPro" id="IPR048258">
    <property type="entry name" value="Cyclins_cyclin-box"/>
</dbReference>
<dbReference type="PANTHER" id="PTHR10177">
    <property type="entry name" value="CYCLINS"/>
    <property type="match status" value="1"/>
</dbReference>
<dbReference type="Pfam" id="PF02984">
    <property type="entry name" value="Cyclin_C"/>
    <property type="match status" value="1"/>
</dbReference>
<dbReference type="Pfam" id="PF00134">
    <property type="entry name" value="Cyclin_N"/>
    <property type="match status" value="1"/>
</dbReference>
<dbReference type="SMART" id="SM00385">
    <property type="entry name" value="CYCLIN"/>
    <property type="match status" value="1"/>
</dbReference>
<dbReference type="SMART" id="SM01332">
    <property type="entry name" value="Cyclin_C"/>
    <property type="match status" value="1"/>
</dbReference>
<dbReference type="SUPFAM" id="SSF47954">
    <property type="entry name" value="Cyclin-like"/>
    <property type="match status" value="2"/>
</dbReference>
<dbReference type="PROSITE" id="PS00292">
    <property type="entry name" value="CYCLINS"/>
    <property type="match status" value="1"/>
</dbReference>
<protein>
    <recommendedName>
        <fullName>Cyclin-D2-2</fullName>
    </recommendedName>
    <alternativeName>
        <fullName>G1/S-specific cyclin-D2-2</fullName>
        <shortName>CycD2;2</shortName>
    </alternativeName>
</protein>
<gene>
    <name type="primary">CYCD2-2</name>
    <name type="ordered locus">Os07g0620800</name>
    <name type="ordered locus">LOC_Os07g42860</name>
    <name type="ORF">OsJ_024175</name>
    <name type="ORF">P0594D10.119</name>
</gene>
<feature type="chain" id="PRO_0000287023" description="Cyclin-D2-2">
    <location>
        <begin position="1"/>
        <end position="356"/>
    </location>
</feature>
<feature type="region of interest" description="Disordered" evidence="1">
    <location>
        <begin position="325"/>
        <end position="356"/>
    </location>
</feature>
<feature type="compositionally biased region" description="Polar residues" evidence="1">
    <location>
        <begin position="325"/>
        <end position="343"/>
    </location>
</feature>
<feature type="compositionally biased region" description="Basic residues" evidence="1">
    <location>
        <begin position="346"/>
        <end position="356"/>
    </location>
</feature>
<name>CCD22_ORYSJ</name>
<comment type="similarity">
    <text evidence="2">Belongs to the cyclin family. Cyclin D subfamily.</text>
</comment>
<evidence type="ECO:0000256" key="1">
    <source>
        <dbReference type="SAM" id="MobiDB-lite"/>
    </source>
</evidence>
<evidence type="ECO:0000305" key="2"/>
<keyword id="KW-0131">Cell cycle</keyword>
<keyword id="KW-0132">Cell division</keyword>
<keyword id="KW-0195">Cyclin</keyword>
<keyword id="KW-1185">Reference proteome</keyword>
<organism>
    <name type="scientific">Oryza sativa subsp. japonica</name>
    <name type="common">Rice</name>
    <dbReference type="NCBI Taxonomy" id="39947"/>
    <lineage>
        <taxon>Eukaryota</taxon>
        <taxon>Viridiplantae</taxon>
        <taxon>Streptophyta</taxon>
        <taxon>Embryophyta</taxon>
        <taxon>Tracheophyta</taxon>
        <taxon>Spermatophyta</taxon>
        <taxon>Magnoliopsida</taxon>
        <taxon>Liliopsida</taxon>
        <taxon>Poales</taxon>
        <taxon>Poaceae</taxon>
        <taxon>BOP clade</taxon>
        <taxon>Oryzoideae</taxon>
        <taxon>Oryzeae</taxon>
        <taxon>Oryzinae</taxon>
        <taxon>Oryza</taxon>
        <taxon>Oryza sativa</taxon>
    </lineage>
</organism>
<accession>Q8LHA8</accession>
<accession>B7E8W7</accession>
<sequence>MGVLCFGASNILLCAEDSSSVLGLGGFGGGGGEVAAELGCGGGGGFDFFGFGGGAVFPIDSDEFVALLVEKEMDHQPQRGYLEKLELGGLECSWRKDAIDWICKVHSYYNFGPLSLYLAVNYLDRFLSSFNLPHDESWMQQLLSVSCLSLATKMEETVVPLPMDLQVFDAEYVFEARHIKRMELIVMKTLKWRLQAVTPFSFIGYFLDKFNEGKPPSYTLASWCSDLTVGTLKDSRFLSFRPSEIAAAVVLAVLAENQFLVFNSALGESEIPVNKEMVMRCYELMVEKALVKKIRNSNASSSVPHSPITVLDAACFSFRSDDTTLGSSQSNSNNKDYNSQDSAPASKRRRLNTTPI</sequence>